<dbReference type="EC" id="5.3.99.3" evidence="1"/>
<dbReference type="EMBL" id="AY692440">
    <property type="protein sequence ID" value="AAU04847.1"/>
    <property type="molecule type" value="mRNA"/>
</dbReference>
<dbReference type="EMBL" id="BC103350">
    <property type="protein sequence ID" value="AAI03351.1"/>
    <property type="molecule type" value="mRNA"/>
</dbReference>
<dbReference type="RefSeq" id="NP_001007807.2">
    <property type="nucleotide sequence ID" value="NM_001007806.2"/>
</dbReference>
<dbReference type="BMRB" id="Q3ZBF7"/>
<dbReference type="SMR" id="Q3ZBF7"/>
<dbReference type="FunCoup" id="Q3ZBF7">
    <property type="interactions" value="3574"/>
</dbReference>
<dbReference type="STRING" id="9913.ENSBTAP00000023908"/>
<dbReference type="PaxDb" id="9913-ENSBTAP00000023908"/>
<dbReference type="Ensembl" id="ENSBTAT00000023908.6">
    <property type="protein sequence ID" value="ENSBTAP00000023908.6"/>
    <property type="gene ID" value="ENSBTAG00000017967.6"/>
</dbReference>
<dbReference type="GeneID" id="493638"/>
<dbReference type="KEGG" id="bta:493638"/>
<dbReference type="CTD" id="10728"/>
<dbReference type="VGNC" id="VGNC:33507">
    <property type="gene designation" value="PTGES3"/>
</dbReference>
<dbReference type="eggNOG" id="KOG3158">
    <property type="taxonomic scope" value="Eukaryota"/>
</dbReference>
<dbReference type="GeneTree" id="ENSGT00940000154256"/>
<dbReference type="HOGENOM" id="CLU_078883_1_2_1"/>
<dbReference type="InParanoid" id="Q3ZBF7"/>
<dbReference type="OrthoDB" id="1564555at2759"/>
<dbReference type="TreeFam" id="TF315077"/>
<dbReference type="BRENDA" id="5.3.99.3">
    <property type="organism ID" value="908"/>
</dbReference>
<dbReference type="UniPathway" id="UPA00662"/>
<dbReference type="Proteomes" id="UP000009136">
    <property type="component" value="Chromosome 5"/>
</dbReference>
<dbReference type="GO" id="GO:0005829">
    <property type="term" value="C:cytosol"/>
    <property type="evidence" value="ECO:0000318"/>
    <property type="project" value="GO_Central"/>
</dbReference>
<dbReference type="GO" id="GO:0005634">
    <property type="term" value="C:nucleus"/>
    <property type="evidence" value="ECO:0000318"/>
    <property type="project" value="GO_Central"/>
</dbReference>
<dbReference type="GO" id="GO:0101031">
    <property type="term" value="C:protein folding chaperone complex"/>
    <property type="evidence" value="ECO:0007669"/>
    <property type="project" value="Ensembl"/>
</dbReference>
<dbReference type="GO" id="GO:0005697">
    <property type="term" value="C:telomerase holoenzyme complex"/>
    <property type="evidence" value="ECO:0007669"/>
    <property type="project" value="Ensembl"/>
</dbReference>
<dbReference type="GO" id="GO:0070182">
    <property type="term" value="F:DNA polymerase binding"/>
    <property type="evidence" value="ECO:0007669"/>
    <property type="project" value="Ensembl"/>
</dbReference>
<dbReference type="GO" id="GO:0051879">
    <property type="term" value="F:Hsp90 protein binding"/>
    <property type="evidence" value="ECO:0000318"/>
    <property type="project" value="GO_Central"/>
</dbReference>
<dbReference type="GO" id="GO:0050220">
    <property type="term" value="F:prostaglandin-E synthase activity"/>
    <property type="evidence" value="ECO:0000318"/>
    <property type="project" value="GO_Central"/>
</dbReference>
<dbReference type="GO" id="GO:0051087">
    <property type="term" value="F:protein-folding chaperone binding"/>
    <property type="evidence" value="ECO:0000318"/>
    <property type="project" value="GO_Central"/>
</dbReference>
<dbReference type="GO" id="GO:0003720">
    <property type="term" value="F:telomerase activity"/>
    <property type="evidence" value="ECO:0007669"/>
    <property type="project" value="Ensembl"/>
</dbReference>
<dbReference type="GO" id="GO:0051082">
    <property type="term" value="F:unfolded protein binding"/>
    <property type="evidence" value="ECO:0007669"/>
    <property type="project" value="Ensembl"/>
</dbReference>
<dbReference type="GO" id="GO:0051085">
    <property type="term" value="P:chaperone cofactor-dependent protein refolding"/>
    <property type="evidence" value="ECO:0007669"/>
    <property type="project" value="Ensembl"/>
</dbReference>
<dbReference type="GO" id="GO:0051131">
    <property type="term" value="P:chaperone-mediated protein complex assembly"/>
    <property type="evidence" value="ECO:0000318"/>
    <property type="project" value="GO_Central"/>
</dbReference>
<dbReference type="GO" id="GO:0032212">
    <property type="term" value="P:positive regulation of telomere maintenance via telomerase"/>
    <property type="evidence" value="ECO:0007669"/>
    <property type="project" value="Ensembl"/>
</dbReference>
<dbReference type="GO" id="GO:0001516">
    <property type="term" value="P:prostaglandin biosynthetic process"/>
    <property type="evidence" value="ECO:0000318"/>
    <property type="project" value="GO_Central"/>
</dbReference>
<dbReference type="GO" id="GO:0006457">
    <property type="term" value="P:protein folding"/>
    <property type="evidence" value="ECO:0000318"/>
    <property type="project" value="GO_Central"/>
</dbReference>
<dbReference type="GO" id="GO:0050821">
    <property type="term" value="P:protein stabilization"/>
    <property type="evidence" value="ECO:0007669"/>
    <property type="project" value="Ensembl"/>
</dbReference>
<dbReference type="GO" id="GO:1905323">
    <property type="term" value="P:telomerase holoenzyme complex assembly"/>
    <property type="evidence" value="ECO:0000318"/>
    <property type="project" value="GO_Central"/>
</dbReference>
<dbReference type="GO" id="GO:0007004">
    <property type="term" value="P:telomere maintenance via telomerase"/>
    <property type="evidence" value="ECO:0000318"/>
    <property type="project" value="GO_Central"/>
</dbReference>
<dbReference type="CDD" id="cd00237">
    <property type="entry name" value="p23"/>
    <property type="match status" value="1"/>
</dbReference>
<dbReference type="FunFam" id="2.60.40.790:FF:000003">
    <property type="entry name" value="prostaglandin E synthase 3"/>
    <property type="match status" value="1"/>
</dbReference>
<dbReference type="Gene3D" id="2.60.40.790">
    <property type="match status" value="1"/>
</dbReference>
<dbReference type="InterPro" id="IPR007052">
    <property type="entry name" value="CS_dom"/>
</dbReference>
<dbReference type="InterPro" id="IPR008978">
    <property type="entry name" value="HSP20-like_chaperone"/>
</dbReference>
<dbReference type="InterPro" id="IPR045250">
    <property type="entry name" value="p23-like"/>
</dbReference>
<dbReference type="PANTHER" id="PTHR22932:SF3">
    <property type="entry name" value="PROSTAGLANDIN E SYNTHASE 3"/>
    <property type="match status" value="1"/>
</dbReference>
<dbReference type="PANTHER" id="PTHR22932">
    <property type="entry name" value="TELOMERASE-BINDING PROTEIN P23 HSP90 CO-CHAPERONE"/>
    <property type="match status" value="1"/>
</dbReference>
<dbReference type="Pfam" id="PF04969">
    <property type="entry name" value="CS"/>
    <property type="match status" value="1"/>
</dbReference>
<dbReference type="SUPFAM" id="SSF49764">
    <property type="entry name" value="HSP20-like chaperones"/>
    <property type="match status" value="1"/>
</dbReference>
<dbReference type="PROSITE" id="PS51203">
    <property type="entry name" value="CS"/>
    <property type="match status" value="1"/>
</dbReference>
<comment type="function">
    <text evidence="1">Cytosolic prostaglandin synthase that catalyzes the oxidoreduction of prostaglandin endoperoxide H2 (PGH2) to prostaglandin E2 (PGE2). Molecular chaperone that localizes to genomic response elements in a hormone-dependent manner and disrupts receptor-mediated transcriptional activation, by promoting disassembly of transcriptional regulatory complexes. Facilitates HIF alpha proteins hydroxylation via interaction with EGLN1/PHD2, leading to recruit EGLN1/PHD2 to the HSP90 pathway.</text>
</comment>
<comment type="catalytic activity">
    <reaction evidence="1">
        <text>prostaglandin H2 = prostaglandin E2</text>
        <dbReference type="Rhea" id="RHEA:12893"/>
        <dbReference type="ChEBI" id="CHEBI:57405"/>
        <dbReference type="ChEBI" id="CHEBI:606564"/>
        <dbReference type="EC" id="5.3.99.3"/>
    </reaction>
</comment>
<comment type="pathway">
    <text evidence="1">Lipid metabolism; prostaglandin biosynthesis.</text>
</comment>
<comment type="subunit">
    <text evidence="1">Probably forms a complex composed of chaperones HSP90 and HSP70, co-chaperones STIP1/HOP, CDC37, PPP5C, PTGES3/p23, TSC1 and client protein TSC2. Binds to the progesterone receptor. Interacts with TERT; the interaction, together with HSP90AA1, is required for correct assembly and stabilization of the telomerase holoenzyme complex. Interacts (via PXLE motif) with EGLN1/PHD2, recruiting EGLN1/PHD2 to the HSP90 pathway to facilitate HIF alpha proteins hydroxylation. Interacts with HSP90AA1, FLCN, FNIP1 and FNIP2.</text>
</comment>
<comment type="subcellular location">
    <subcellularLocation>
        <location evidence="5">Cytoplasm</location>
    </subcellularLocation>
</comment>
<comment type="tissue specificity">
    <text evidence="5">Detected in testis and ovary, at lower levels in endometrium, myometrium, kidney and lung, and only faintly in spleen, heart and muscle (at protein level). Expressed at high levels in glandular and luminal epithelial cells of the endometrium, but also detected in stromal cells (at protein level).</text>
</comment>
<comment type="induction">
    <text evidence="5">Expression declines progressively during the estrous cycle; it is higher at the beginning (days 1-9) and then follows a progressive decline to reach its lowest point at the follicular phase of the cycle (days 19-21).</text>
</comment>
<comment type="PTM">
    <text evidence="1">Proteolytically cleaved by caspase-7 (CASP7) in response to apoptosis, leading to its inactivation.</text>
</comment>
<comment type="similarity">
    <text evidence="6">Belongs to the p23/wos2 family.</text>
</comment>
<keyword id="KW-0007">Acetylation</keyword>
<keyword id="KW-0963">Cytoplasm</keyword>
<keyword id="KW-0275">Fatty acid biosynthesis</keyword>
<keyword id="KW-0276">Fatty acid metabolism</keyword>
<keyword id="KW-0413">Isomerase</keyword>
<keyword id="KW-1017">Isopeptide bond</keyword>
<keyword id="KW-0444">Lipid biosynthesis</keyword>
<keyword id="KW-0443">Lipid metabolism</keyword>
<keyword id="KW-0597">Phosphoprotein</keyword>
<keyword id="KW-0643">Prostaglandin biosynthesis</keyword>
<keyword id="KW-0644">Prostaglandin metabolism</keyword>
<keyword id="KW-1185">Reference proteome</keyword>
<keyword id="KW-0832">Ubl conjugation</keyword>
<feature type="chain" id="PRO_0000288778" description="Prostaglandin E synthase 3">
    <location>
        <begin position="1"/>
        <end position="160"/>
    </location>
</feature>
<feature type="domain" description="CS" evidence="3">
    <location>
        <begin position="1"/>
        <end position="90"/>
    </location>
</feature>
<feature type="region of interest" description="Disordered" evidence="4">
    <location>
        <begin position="124"/>
        <end position="160"/>
    </location>
</feature>
<feature type="short sequence motif" description="PXLE motif" evidence="1">
    <location>
        <begin position="157"/>
        <end position="160"/>
    </location>
</feature>
<feature type="compositionally biased region" description="Acidic residues" evidence="4">
    <location>
        <begin position="132"/>
        <end position="153"/>
    </location>
</feature>
<feature type="site" description="Cleavage; by caspase-7" evidence="1">
    <location>
        <begin position="142"/>
        <end position="143"/>
    </location>
</feature>
<feature type="modified residue" description="N6-acetyllysine" evidence="1">
    <location>
        <position position="33"/>
    </location>
</feature>
<feature type="modified residue" description="Phosphoserine" evidence="1">
    <location>
        <position position="44"/>
    </location>
</feature>
<feature type="modified residue" description="Phosphoserine" evidence="1">
    <location>
        <position position="85"/>
    </location>
</feature>
<feature type="modified residue" description="Phosphoserine" evidence="2">
    <location>
        <position position="100"/>
    </location>
</feature>
<feature type="modified residue" description="Phosphoserine" evidence="1">
    <location>
        <position position="113"/>
    </location>
</feature>
<feature type="modified residue" description="Phosphoserine" evidence="1">
    <location>
        <position position="118"/>
    </location>
</feature>
<feature type="modified residue" description="Phosphoserine" evidence="1">
    <location>
        <position position="148"/>
    </location>
</feature>
<feature type="modified residue" description="Phosphoserine" evidence="1">
    <location>
        <position position="151"/>
    </location>
</feature>
<feature type="cross-link" description="Glycyl lysine isopeptide (Lys-Gly) (interchain with G-Cter in SUMO2)" evidence="1">
    <location>
        <position position="35"/>
    </location>
</feature>
<feature type="cross-link" description="Glycyl lysine isopeptide (Lys-Gly) (interchain with G-Cter in SUMO2)" evidence="1">
    <location>
        <position position="65"/>
    </location>
</feature>
<feature type="sequence conflict" description="In Ref. 1; AAU04847." evidence="6" ref="1">
    <original>RD</original>
    <variation>GG</variation>
    <location>
        <begin position="12"/>
        <end position="13"/>
    </location>
</feature>
<proteinExistence type="evidence at protein level"/>
<name>TEBP_BOVIN</name>
<accession>Q3ZBF7</accession>
<accession>Q66LN1</accession>
<sequence>MQPASAKWYDRRDYVFIEFCVEDSKDVNVNFEKSKLTFSCLGGSDNFKHLNEIDLFHCIDPNDSKHKRTDRSILCCLRKGESGQSWPRLTKERAKLNWLSVDFNNWKDWEDDSDEDMSNFDRFSEMMNNMGGDEDVDLPEVDGADDDSQDSDDEKMPDLE</sequence>
<protein>
    <recommendedName>
        <fullName>Prostaglandin E synthase 3</fullName>
        <ecNumber evidence="1">5.3.99.3</ecNumber>
    </recommendedName>
    <alternativeName>
        <fullName>Cytosolic prostaglandin E2 synthase</fullName>
        <shortName>cPGES</shortName>
    </alternativeName>
</protein>
<reference key="1">
    <citation type="journal article" date="2005" name="Biol. Reprod.">
        <title>Expression and contribution of three different isoforms of prostaglandin E synthase in the bovine endometrium.</title>
        <authorList>
            <person name="Parent J."/>
            <person name="Fortier M.A."/>
        </authorList>
    </citation>
    <scope>NUCLEOTIDE SEQUENCE [MRNA]</scope>
    <scope>SUBCELLULAR LOCATION</scope>
    <scope>INDUCTION</scope>
    <scope>TISSUE SPECIFICITY</scope>
    <source>
        <tissue>Endometrium</tissue>
    </source>
</reference>
<reference key="2">
    <citation type="submission" date="2005-08" db="EMBL/GenBank/DDBJ databases">
        <authorList>
            <consortium name="NIH - Mammalian Gene Collection (MGC) project"/>
        </authorList>
    </citation>
    <scope>NUCLEOTIDE SEQUENCE [LARGE SCALE MRNA]</scope>
    <source>
        <strain>Crossbred X Angus</strain>
        <tissue>Ileum</tissue>
    </source>
</reference>
<organism>
    <name type="scientific">Bos taurus</name>
    <name type="common">Bovine</name>
    <dbReference type="NCBI Taxonomy" id="9913"/>
    <lineage>
        <taxon>Eukaryota</taxon>
        <taxon>Metazoa</taxon>
        <taxon>Chordata</taxon>
        <taxon>Craniata</taxon>
        <taxon>Vertebrata</taxon>
        <taxon>Euteleostomi</taxon>
        <taxon>Mammalia</taxon>
        <taxon>Eutheria</taxon>
        <taxon>Laurasiatheria</taxon>
        <taxon>Artiodactyla</taxon>
        <taxon>Ruminantia</taxon>
        <taxon>Pecora</taxon>
        <taxon>Bovidae</taxon>
        <taxon>Bovinae</taxon>
        <taxon>Bos</taxon>
    </lineage>
</organism>
<gene>
    <name type="primary">PTGES3</name>
</gene>
<evidence type="ECO:0000250" key="1">
    <source>
        <dbReference type="UniProtKB" id="Q15185"/>
    </source>
</evidence>
<evidence type="ECO:0000250" key="2">
    <source>
        <dbReference type="UniProtKB" id="Q9R0Q7"/>
    </source>
</evidence>
<evidence type="ECO:0000255" key="3">
    <source>
        <dbReference type="PROSITE-ProRule" id="PRU00547"/>
    </source>
</evidence>
<evidence type="ECO:0000256" key="4">
    <source>
        <dbReference type="SAM" id="MobiDB-lite"/>
    </source>
</evidence>
<evidence type="ECO:0000269" key="5">
    <source>
    </source>
</evidence>
<evidence type="ECO:0000305" key="6"/>